<organism>
    <name type="scientific">Hahella chejuensis (strain KCTC 2396)</name>
    <dbReference type="NCBI Taxonomy" id="349521"/>
    <lineage>
        <taxon>Bacteria</taxon>
        <taxon>Pseudomonadati</taxon>
        <taxon>Pseudomonadota</taxon>
        <taxon>Gammaproteobacteria</taxon>
        <taxon>Oceanospirillales</taxon>
        <taxon>Hahellaceae</taxon>
        <taxon>Hahella</taxon>
    </lineage>
</organism>
<proteinExistence type="inferred from homology"/>
<gene>
    <name evidence="1" type="primary">rsmH</name>
    <name type="synonym">mraW</name>
    <name type="ordered locus">HCH_05891</name>
</gene>
<accession>Q2S9Y4</accession>
<evidence type="ECO:0000255" key="1">
    <source>
        <dbReference type="HAMAP-Rule" id="MF_01007"/>
    </source>
</evidence>
<name>RSMH_HAHCH</name>
<reference key="1">
    <citation type="journal article" date="2005" name="Nucleic Acids Res.">
        <title>Genomic blueprint of Hahella chejuensis, a marine microbe producing an algicidal agent.</title>
        <authorList>
            <person name="Jeong H."/>
            <person name="Yim J.H."/>
            <person name="Lee C."/>
            <person name="Choi S.-H."/>
            <person name="Park Y.K."/>
            <person name="Yoon S.H."/>
            <person name="Hur C.-G."/>
            <person name="Kang H.-Y."/>
            <person name="Kim D."/>
            <person name="Lee H.H."/>
            <person name="Park K.H."/>
            <person name="Park S.-H."/>
            <person name="Park H.-S."/>
            <person name="Lee H.K."/>
            <person name="Oh T.K."/>
            <person name="Kim J.F."/>
        </authorList>
    </citation>
    <scope>NUCLEOTIDE SEQUENCE [LARGE SCALE GENOMIC DNA]</scope>
    <source>
        <strain>KCTC 2396</strain>
    </source>
</reference>
<sequence length="309" mass="34162">MESNQYGHVTVLLAEAVEALGVKADGLYIDGTFGRGGHSAEILKALGPQGRLLGIDKDPRARRTAMERFSGDDRFLFRQGSFADMASFVSELQWPGVDGVLLDLGVSSPQLDEAERGFSFMQDGPLDMRMDPDSGLSASEWVNTAKEEEISKVLWDLGEERFARRMAKAIVAARQTQPITRTLQLAEIVAAANPRWEKGKNPATRAFQAIRIFINRELDDLAQGLEQAFGVLKPGGRLTVISFHSLEDRMVKQYMRDIVRGPKTPKWLPVVDDAPPKAKLVGKKIRAGETEVVANVRARSAVMRVLEKC</sequence>
<dbReference type="EC" id="2.1.1.199" evidence="1"/>
<dbReference type="EMBL" id="CP000155">
    <property type="protein sequence ID" value="ABC32540.1"/>
    <property type="molecule type" value="Genomic_DNA"/>
</dbReference>
<dbReference type="RefSeq" id="WP_011399599.1">
    <property type="nucleotide sequence ID" value="NC_007645.1"/>
</dbReference>
<dbReference type="SMR" id="Q2S9Y4"/>
<dbReference type="STRING" id="349521.HCH_05891"/>
<dbReference type="KEGG" id="hch:HCH_05891"/>
<dbReference type="eggNOG" id="COG0275">
    <property type="taxonomic scope" value="Bacteria"/>
</dbReference>
<dbReference type="HOGENOM" id="CLU_038422_2_0_6"/>
<dbReference type="OrthoDB" id="9806637at2"/>
<dbReference type="Proteomes" id="UP000000238">
    <property type="component" value="Chromosome"/>
</dbReference>
<dbReference type="GO" id="GO:0005737">
    <property type="term" value="C:cytoplasm"/>
    <property type="evidence" value="ECO:0007669"/>
    <property type="project" value="UniProtKB-SubCell"/>
</dbReference>
<dbReference type="GO" id="GO:0071424">
    <property type="term" value="F:rRNA (cytosine-N4-)-methyltransferase activity"/>
    <property type="evidence" value="ECO:0007669"/>
    <property type="project" value="UniProtKB-UniRule"/>
</dbReference>
<dbReference type="GO" id="GO:0070475">
    <property type="term" value="P:rRNA base methylation"/>
    <property type="evidence" value="ECO:0007669"/>
    <property type="project" value="UniProtKB-UniRule"/>
</dbReference>
<dbReference type="FunFam" id="1.10.150.170:FF:000001">
    <property type="entry name" value="Ribosomal RNA small subunit methyltransferase H"/>
    <property type="match status" value="1"/>
</dbReference>
<dbReference type="Gene3D" id="1.10.150.170">
    <property type="entry name" value="Putative methyltransferase TM0872, insert domain"/>
    <property type="match status" value="1"/>
</dbReference>
<dbReference type="Gene3D" id="3.40.50.150">
    <property type="entry name" value="Vaccinia Virus protein VP39"/>
    <property type="match status" value="1"/>
</dbReference>
<dbReference type="HAMAP" id="MF_01007">
    <property type="entry name" value="16SrRNA_methyltr_H"/>
    <property type="match status" value="1"/>
</dbReference>
<dbReference type="InterPro" id="IPR002903">
    <property type="entry name" value="RsmH"/>
</dbReference>
<dbReference type="InterPro" id="IPR023397">
    <property type="entry name" value="SAM-dep_MeTrfase_MraW_recog"/>
</dbReference>
<dbReference type="InterPro" id="IPR029063">
    <property type="entry name" value="SAM-dependent_MTases_sf"/>
</dbReference>
<dbReference type="NCBIfam" id="TIGR00006">
    <property type="entry name" value="16S rRNA (cytosine(1402)-N(4))-methyltransferase RsmH"/>
    <property type="match status" value="1"/>
</dbReference>
<dbReference type="PANTHER" id="PTHR11265:SF0">
    <property type="entry name" value="12S RRNA N4-METHYLCYTIDINE METHYLTRANSFERASE"/>
    <property type="match status" value="1"/>
</dbReference>
<dbReference type="PANTHER" id="PTHR11265">
    <property type="entry name" value="S-ADENOSYL-METHYLTRANSFERASE MRAW"/>
    <property type="match status" value="1"/>
</dbReference>
<dbReference type="Pfam" id="PF01795">
    <property type="entry name" value="Methyltransf_5"/>
    <property type="match status" value="1"/>
</dbReference>
<dbReference type="PIRSF" id="PIRSF004486">
    <property type="entry name" value="MraW"/>
    <property type="match status" value="1"/>
</dbReference>
<dbReference type="SUPFAM" id="SSF81799">
    <property type="entry name" value="Putative methyltransferase TM0872, insert domain"/>
    <property type="match status" value="1"/>
</dbReference>
<dbReference type="SUPFAM" id="SSF53335">
    <property type="entry name" value="S-adenosyl-L-methionine-dependent methyltransferases"/>
    <property type="match status" value="1"/>
</dbReference>
<keyword id="KW-0963">Cytoplasm</keyword>
<keyword id="KW-0489">Methyltransferase</keyword>
<keyword id="KW-1185">Reference proteome</keyword>
<keyword id="KW-0698">rRNA processing</keyword>
<keyword id="KW-0949">S-adenosyl-L-methionine</keyword>
<keyword id="KW-0808">Transferase</keyword>
<comment type="function">
    <text evidence="1">Specifically methylates the N4 position of cytidine in position 1402 (C1402) of 16S rRNA.</text>
</comment>
<comment type="catalytic activity">
    <reaction evidence="1">
        <text>cytidine(1402) in 16S rRNA + S-adenosyl-L-methionine = N(4)-methylcytidine(1402) in 16S rRNA + S-adenosyl-L-homocysteine + H(+)</text>
        <dbReference type="Rhea" id="RHEA:42928"/>
        <dbReference type="Rhea" id="RHEA-COMP:10286"/>
        <dbReference type="Rhea" id="RHEA-COMP:10287"/>
        <dbReference type="ChEBI" id="CHEBI:15378"/>
        <dbReference type="ChEBI" id="CHEBI:57856"/>
        <dbReference type="ChEBI" id="CHEBI:59789"/>
        <dbReference type="ChEBI" id="CHEBI:74506"/>
        <dbReference type="ChEBI" id="CHEBI:82748"/>
        <dbReference type="EC" id="2.1.1.199"/>
    </reaction>
</comment>
<comment type="subcellular location">
    <subcellularLocation>
        <location evidence="1">Cytoplasm</location>
    </subcellularLocation>
</comment>
<comment type="similarity">
    <text evidence="1">Belongs to the methyltransferase superfamily. RsmH family.</text>
</comment>
<protein>
    <recommendedName>
        <fullName evidence="1">Ribosomal RNA small subunit methyltransferase H</fullName>
        <ecNumber evidence="1">2.1.1.199</ecNumber>
    </recommendedName>
    <alternativeName>
        <fullName evidence="1">16S rRNA m(4)C1402 methyltransferase</fullName>
    </alternativeName>
    <alternativeName>
        <fullName evidence="1">rRNA (cytosine-N(4)-)-methyltransferase RsmH</fullName>
    </alternativeName>
</protein>
<feature type="chain" id="PRO_0000386922" description="Ribosomal RNA small subunit methyltransferase H">
    <location>
        <begin position="1"/>
        <end position="309"/>
    </location>
</feature>
<feature type="binding site" evidence="1">
    <location>
        <begin position="36"/>
        <end position="38"/>
    </location>
    <ligand>
        <name>S-adenosyl-L-methionine</name>
        <dbReference type="ChEBI" id="CHEBI:59789"/>
    </ligand>
</feature>
<feature type="binding site" evidence="1">
    <location>
        <position position="56"/>
    </location>
    <ligand>
        <name>S-adenosyl-L-methionine</name>
        <dbReference type="ChEBI" id="CHEBI:59789"/>
    </ligand>
</feature>
<feature type="binding site" evidence="1">
    <location>
        <position position="82"/>
    </location>
    <ligand>
        <name>S-adenosyl-L-methionine</name>
        <dbReference type="ChEBI" id="CHEBI:59789"/>
    </ligand>
</feature>
<feature type="binding site" evidence="1">
    <location>
        <position position="103"/>
    </location>
    <ligand>
        <name>S-adenosyl-L-methionine</name>
        <dbReference type="ChEBI" id="CHEBI:59789"/>
    </ligand>
</feature>
<feature type="binding site" evidence="1">
    <location>
        <position position="110"/>
    </location>
    <ligand>
        <name>S-adenosyl-L-methionine</name>
        <dbReference type="ChEBI" id="CHEBI:59789"/>
    </ligand>
</feature>